<evidence type="ECO:0000255" key="1">
    <source>
        <dbReference type="HAMAP-Rule" id="MF_01642"/>
    </source>
</evidence>
<comment type="function">
    <text evidence="1">Involved in the synthesis of meso-diaminopimelate (m-DAP or DL-DAP), required for both lysine and peptidoglycan biosynthesis. Catalyzes the direct conversion of tetrahydrodipicolinate to LL-diaminopimelate.</text>
</comment>
<comment type="catalytic activity">
    <reaction evidence="1">
        <text>(2S,6S)-2,6-diaminopimelate + 2-oxoglutarate = (S)-2,3,4,5-tetrahydrodipicolinate + L-glutamate + H2O + H(+)</text>
        <dbReference type="Rhea" id="RHEA:23988"/>
        <dbReference type="ChEBI" id="CHEBI:15377"/>
        <dbReference type="ChEBI" id="CHEBI:15378"/>
        <dbReference type="ChEBI" id="CHEBI:16810"/>
        <dbReference type="ChEBI" id="CHEBI:16845"/>
        <dbReference type="ChEBI" id="CHEBI:29985"/>
        <dbReference type="ChEBI" id="CHEBI:57609"/>
        <dbReference type="EC" id="2.6.1.83"/>
    </reaction>
</comment>
<comment type="cofactor">
    <cofactor evidence="1">
        <name>pyridoxal 5'-phosphate</name>
        <dbReference type="ChEBI" id="CHEBI:597326"/>
    </cofactor>
</comment>
<comment type="pathway">
    <text evidence="1">Amino-acid biosynthesis; L-lysine biosynthesis via DAP pathway; LL-2,6-diaminopimelate from (S)-tetrahydrodipicolinate (aminotransferase route): step 1/1.</text>
</comment>
<comment type="subunit">
    <text evidence="1">Homodimer.</text>
</comment>
<comment type="similarity">
    <text evidence="1">Belongs to the class-I pyridoxal-phosphate-dependent aminotransferase family. LL-diaminopimelate aminotransferase subfamily.</text>
</comment>
<accession>C0QFJ4</accession>
<organism>
    <name type="scientific">Desulforapulum autotrophicum (strain ATCC 43914 / DSM 3382 / VKM B-1955 / HRM2)</name>
    <name type="common">Desulfobacterium autotrophicum</name>
    <dbReference type="NCBI Taxonomy" id="177437"/>
    <lineage>
        <taxon>Bacteria</taxon>
        <taxon>Pseudomonadati</taxon>
        <taxon>Thermodesulfobacteriota</taxon>
        <taxon>Desulfobacteria</taxon>
        <taxon>Desulfobacterales</taxon>
        <taxon>Desulfobacteraceae</taxon>
        <taxon>Desulforapulum</taxon>
    </lineage>
</organism>
<name>DAPAT_DESAH</name>
<feature type="chain" id="PRO_1000215829" description="LL-diaminopimelate aminotransferase">
    <location>
        <begin position="1"/>
        <end position="409"/>
    </location>
</feature>
<feature type="binding site" evidence="1">
    <location>
        <position position="15"/>
    </location>
    <ligand>
        <name>substrate</name>
    </ligand>
</feature>
<feature type="binding site" evidence="1">
    <location>
        <position position="42"/>
    </location>
    <ligand>
        <name>substrate</name>
    </ligand>
</feature>
<feature type="binding site" evidence="1">
    <location>
        <position position="72"/>
    </location>
    <ligand>
        <name>pyridoxal 5'-phosphate</name>
        <dbReference type="ChEBI" id="CHEBI:597326"/>
    </ligand>
</feature>
<feature type="binding site" evidence="1">
    <location>
        <begin position="108"/>
        <end position="109"/>
    </location>
    <ligand>
        <name>pyridoxal 5'-phosphate</name>
        <dbReference type="ChEBI" id="CHEBI:597326"/>
    </ligand>
</feature>
<feature type="binding site" evidence="1">
    <location>
        <position position="109"/>
    </location>
    <ligand>
        <name>substrate</name>
    </ligand>
</feature>
<feature type="binding site" evidence="1">
    <location>
        <position position="132"/>
    </location>
    <ligand>
        <name>pyridoxal 5'-phosphate</name>
        <dbReference type="ChEBI" id="CHEBI:597326"/>
    </ligand>
</feature>
<feature type="binding site" evidence="1">
    <location>
        <position position="132"/>
    </location>
    <ligand>
        <name>substrate</name>
    </ligand>
</feature>
<feature type="binding site" evidence="1">
    <location>
        <position position="186"/>
    </location>
    <ligand>
        <name>pyridoxal 5'-phosphate</name>
        <dbReference type="ChEBI" id="CHEBI:597326"/>
    </ligand>
</feature>
<feature type="binding site" evidence="1">
    <location>
        <position position="186"/>
    </location>
    <ligand>
        <name>substrate</name>
    </ligand>
</feature>
<feature type="binding site" evidence="1">
    <location>
        <position position="217"/>
    </location>
    <ligand>
        <name>pyridoxal 5'-phosphate</name>
        <dbReference type="ChEBI" id="CHEBI:597326"/>
    </ligand>
</feature>
<feature type="binding site" evidence="1">
    <location>
        <begin position="245"/>
        <end position="247"/>
    </location>
    <ligand>
        <name>pyridoxal 5'-phosphate</name>
        <dbReference type="ChEBI" id="CHEBI:597326"/>
    </ligand>
</feature>
<feature type="binding site" evidence="1">
    <location>
        <position position="256"/>
    </location>
    <ligand>
        <name>pyridoxal 5'-phosphate</name>
        <dbReference type="ChEBI" id="CHEBI:597326"/>
    </ligand>
</feature>
<feature type="binding site" evidence="1">
    <location>
        <position position="291"/>
    </location>
    <ligand>
        <name>pyridoxal 5'-phosphate</name>
        <dbReference type="ChEBI" id="CHEBI:597326"/>
    </ligand>
</feature>
<feature type="binding site" evidence="1">
    <location>
        <position position="291"/>
    </location>
    <ligand>
        <name>substrate</name>
    </ligand>
</feature>
<feature type="binding site" evidence="1">
    <location>
        <position position="386"/>
    </location>
    <ligand>
        <name>substrate</name>
    </ligand>
</feature>
<feature type="modified residue" description="N6-(pyridoxal phosphate)lysine" evidence="1">
    <location>
        <position position="248"/>
    </location>
</feature>
<dbReference type="EC" id="2.6.1.83" evidence="1"/>
<dbReference type="EMBL" id="CP001087">
    <property type="protein sequence ID" value="ACN13390.1"/>
    <property type="molecule type" value="Genomic_DNA"/>
</dbReference>
<dbReference type="RefSeq" id="WP_012662639.1">
    <property type="nucleotide sequence ID" value="NC_012108.1"/>
</dbReference>
<dbReference type="SMR" id="C0QFJ4"/>
<dbReference type="STRING" id="177437.HRM2_02680"/>
<dbReference type="KEGG" id="dat:HRM2_02680"/>
<dbReference type="eggNOG" id="COG0436">
    <property type="taxonomic scope" value="Bacteria"/>
</dbReference>
<dbReference type="HOGENOM" id="CLU_051433_0_0_7"/>
<dbReference type="OrthoDB" id="9804474at2"/>
<dbReference type="UniPathway" id="UPA00034">
    <property type="reaction ID" value="UER00466"/>
</dbReference>
<dbReference type="Proteomes" id="UP000000442">
    <property type="component" value="Chromosome"/>
</dbReference>
<dbReference type="GO" id="GO:0010285">
    <property type="term" value="F:L,L-diaminopimelate aminotransferase activity"/>
    <property type="evidence" value="ECO:0007669"/>
    <property type="project" value="UniProtKB-EC"/>
</dbReference>
<dbReference type="GO" id="GO:0030170">
    <property type="term" value="F:pyridoxal phosphate binding"/>
    <property type="evidence" value="ECO:0007669"/>
    <property type="project" value="InterPro"/>
</dbReference>
<dbReference type="GO" id="GO:0009089">
    <property type="term" value="P:lysine biosynthetic process via diaminopimelate"/>
    <property type="evidence" value="ECO:0007669"/>
    <property type="project" value="UniProtKB-UniPathway"/>
</dbReference>
<dbReference type="CDD" id="cd00609">
    <property type="entry name" value="AAT_like"/>
    <property type="match status" value="1"/>
</dbReference>
<dbReference type="FunFam" id="3.40.640.10:FF:000099">
    <property type="entry name" value="LL-diaminopimelate aminotransferase, chloroplastic"/>
    <property type="match status" value="1"/>
</dbReference>
<dbReference type="Gene3D" id="3.90.1150.10">
    <property type="entry name" value="Aspartate Aminotransferase, domain 1"/>
    <property type="match status" value="1"/>
</dbReference>
<dbReference type="Gene3D" id="3.40.640.10">
    <property type="entry name" value="Type I PLP-dependent aspartate aminotransferase-like (Major domain)"/>
    <property type="match status" value="1"/>
</dbReference>
<dbReference type="HAMAP" id="MF_01642">
    <property type="entry name" value="DapL_aminotrans_1"/>
    <property type="match status" value="1"/>
</dbReference>
<dbReference type="InterPro" id="IPR004839">
    <property type="entry name" value="Aminotransferase_I/II_large"/>
</dbReference>
<dbReference type="InterPro" id="IPR019942">
    <property type="entry name" value="DapL/ALD1"/>
</dbReference>
<dbReference type="InterPro" id="IPR015424">
    <property type="entry name" value="PyrdxlP-dep_Trfase"/>
</dbReference>
<dbReference type="InterPro" id="IPR015421">
    <property type="entry name" value="PyrdxlP-dep_Trfase_major"/>
</dbReference>
<dbReference type="InterPro" id="IPR015422">
    <property type="entry name" value="PyrdxlP-dep_Trfase_small"/>
</dbReference>
<dbReference type="NCBIfam" id="TIGR03542">
    <property type="entry name" value="DAPAT_plant"/>
    <property type="match status" value="1"/>
</dbReference>
<dbReference type="PANTHER" id="PTHR43144">
    <property type="entry name" value="AMINOTRANSFERASE"/>
    <property type="match status" value="1"/>
</dbReference>
<dbReference type="Pfam" id="PF00155">
    <property type="entry name" value="Aminotran_1_2"/>
    <property type="match status" value="1"/>
</dbReference>
<dbReference type="SUPFAM" id="SSF53383">
    <property type="entry name" value="PLP-dependent transferases"/>
    <property type="match status" value="1"/>
</dbReference>
<protein>
    <recommendedName>
        <fullName evidence="1">LL-diaminopimelate aminotransferase</fullName>
        <shortName evidence="1">DAP-AT</shortName>
        <shortName evidence="1">DAP-aminotransferase</shortName>
        <shortName evidence="1">LL-DAP-aminotransferase</shortName>
        <ecNumber evidence="1">2.6.1.83</ecNumber>
    </recommendedName>
</protein>
<keyword id="KW-0032">Aminotransferase</keyword>
<keyword id="KW-0663">Pyridoxal phosphate</keyword>
<keyword id="KW-1185">Reference proteome</keyword>
<keyword id="KW-0808">Transferase</keyword>
<gene>
    <name evidence="1" type="primary">dapL</name>
    <name type="ordered locus">HRM2_02680</name>
</gene>
<reference key="1">
    <citation type="journal article" date="2009" name="Environ. Microbiol.">
        <title>Genome sequence of Desulfobacterium autotrophicum HRM2, a marine sulfate reducer oxidizing organic carbon completely to carbon dioxide.</title>
        <authorList>
            <person name="Strittmatter A.W."/>
            <person name="Liesegang H."/>
            <person name="Rabus R."/>
            <person name="Decker I."/>
            <person name="Amann J."/>
            <person name="Andres S."/>
            <person name="Henne A."/>
            <person name="Fricke W.F."/>
            <person name="Martinez-Arias R."/>
            <person name="Bartels D."/>
            <person name="Goesmann A."/>
            <person name="Krause L."/>
            <person name="Puehler A."/>
            <person name="Klenk H.P."/>
            <person name="Richter M."/>
            <person name="Schuler M."/>
            <person name="Gloeckner F.O."/>
            <person name="Meyerdierks A."/>
            <person name="Gottschalk G."/>
            <person name="Amann R."/>
        </authorList>
    </citation>
    <scope>NUCLEOTIDE SEQUENCE [LARGE SCALE GENOMIC DNA]</scope>
    <source>
        <strain>ATCC 43914 / DSM 3382 / VKM B-1955 / HRM2</strain>
    </source>
</reference>
<proteinExistence type="inferred from homology"/>
<sequence length="409" mass="45151">MIRSNPHYEKLRSSYLFSDIAKRVAAHQESHPGVDIIRLGIGDVTHALPDACVAAFHRGVDEMANDATFRGYGPEQGYAFLREKIASEDFKARGADIDSDEIFVSDGAKCDTGNFQELFSTDIRIAIPDPVYPVYLDTNVMAGRTGEFKDGRYGGVSYMDCTAENNFVPDLPQEQVDLIYLCFPNNPTGTTITKPELKRWVDYAHEAKALILFDAAYEAFIRDDTLPRSIYEIEGAKEVAVEFRSFSKTAGFTGTRCAYTVVPKACRVFDQKGAAIALHPLWNRRHTTKFNGVSYPVQRAAEAVYSTEGKAQVKALADGYLDNAGIIRRAMDTMGFDCVGGIDSPYVWINGNGRDSWAFFDLLLKKAGVVCTPGTGFGQCGEGYIRISAFNSREKVETAMARMKEALGS</sequence>